<keyword id="KW-0106">Calcium</keyword>
<keyword id="KW-0130">Cell adhesion</keyword>
<keyword id="KW-0965">Cell junction</keyword>
<keyword id="KW-1003">Cell membrane</keyword>
<keyword id="KW-0325">Glycoprotein</keyword>
<keyword id="KW-0472">Membrane</keyword>
<keyword id="KW-0479">Metal-binding</keyword>
<keyword id="KW-1185">Reference proteome</keyword>
<keyword id="KW-0677">Repeat</keyword>
<keyword id="KW-0732">Signal</keyword>
<keyword id="KW-0812">Transmembrane</keyword>
<keyword id="KW-1133">Transmembrane helix</keyword>
<accession>F1QSQ0</accession>
<accession>A0A8M1P697</accession>
<accession>B3DLJ9</accession>
<accession>H2EQR5</accession>
<accession>Q08BK3</accession>
<protein>
    <recommendedName>
        <fullName evidence="9">Desmocollin 2-like protein</fullName>
    </recommendedName>
</protein>
<feature type="signal peptide" evidence="9">
    <location>
        <begin position="1"/>
        <end status="unknown"/>
    </location>
</feature>
<feature type="propeptide" id="PRO_0000457076" evidence="9">
    <location>
        <begin status="unknown"/>
        <end position="166"/>
    </location>
</feature>
<feature type="chain" id="PRO_0000457077" description="Desmocollin 2-like protein">
    <location>
        <begin position="167"/>
        <end position="934"/>
    </location>
</feature>
<feature type="topological domain" description="Extracellular" evidence="2">
    <location>
        <begin position="167"/>
        <end position="716"/>
    </location>
</feature>
<feature type="transmembrane region" description="Helical" evidence="2">
    <location>
        <begin position="717"/>
        <end position="737"/>
    </location>
</feature>
<feature type="topological domain" description="Cytoplasmic" evidence="2">
    <location>
        <begin position="738"/>
        <end position="934"/>
    </location>
</feature>
<feature type="domain" description="Cadherin 1" evidence="3">
    <location>
        <begin position="167"/>
        <end position="274"/>
    </location>
</feature>
<feature type="domain" description="Cadherin 2" evidence="3">
    <location>
        <begin position="274"/>
        <end position="381"/>
    </location>
</feature>
<feature type="domain" description="Cadherin 3" evidence="3">
    <location>
        <begin position="382"/>
        <end position="494"/>
    </location>
</feature>
<feature type="domain" description="Cadherin 4" evidence="3">
    <location>
        <begin position="495"/>
        <end position="600"/>
    </location>
</feature>
<feature type="glycosylation site" description="N-linked (GlcNAc...) asparagine" evidence="4">
    <location>
        <position position="197"/>
    </location>
</feature>
<feature type="glycosylation site" description="N-linked (GlcNAc...) asparagine" evidence="4">
    <location>
        <position position="296"/>
    </location>
</feature>
<feature type="glycosylation site" description="N-linked (GlcNAc...) asparagine" evidence="4">
    <location>
        <position position="316"/>
    </location>
</feature>
<feature type="glycosylation site" description="N-linked (GlcNAc...) asparagine" evidence="4">
    <location>
        <position position="509"/>
    </location>
</feature>
<feature type="glycosylation site" description="N-linked (GlcNAc...) asparagine" evidence="4">
    <location>
        <position position="565"/>
    </location>
</feature>
<feature type="glycosylation site" description="N-linked (GlcNAc...) asparagine" evidence="4">
    <location>
        <position position="569"/>
    </location>
</feature>
<feature type="sequence conflict" description="In Ref. 3; AAI24677/AAI67476." evidence="9" ref="3">
    <original>C</original>
    <variation>F</variation>
    <location>
        <position position="53"/>
    </location>
</feature>
<feature type="sequence conflict" description="In Ref. 3; AAI24677/AAI67476." evidence="9" ref="3">
    <original>V</original>
    <variation>M</variation>
    <location>
        <position position="71"/>
    </location>
</feature>
<feature type="sequence conflict" description="In Ref. 1; AEY64277." evidence="9" ref="1">
    <original>Q</original>
    <variation>R</variation>
    <location>
        <position position="601"/>
    </location>
</feature>
<feature type="sequence conflict" description="In Ref. 3; AAI24677." evidence="9" ref="3">
    <original>A</original>
    <variation>T</variation>
    <location>
        <position position="621"/>
    </location>
</feature>
<feature type="sequence conflict" description="In Ref. 3; AAI24677/AAI67476." evidence="9" ref="3">
    <original>V</original>
    <variation>A</variation>
    <location>
        <position position="655"/>
    </location>
</feature>
<feature type="sequence conflict" description="In Ref. 1; AEY64277." evidence="9" ref="1">
    <original>E</original>
    <variation>D</variation>
    <location>
        <position position="661"/>
    </location>
</feature>
<feature type="sequence conflict" description="In Ref. 1; AEY64277." evidence="9" ref="1">
    <original>S</original>
    <variation>M</variation>
    <location>
        <position position="698"/>
    </location>
</feature>
<gene>
    <name evidence="14" type="primary">dsc2l</name>
    <name evidence="9" type="synonym">dsc</name>
    <name evidence="8" type="synonym">dsc2</name>
</gene>
<name>DSC2L_DANRE</name>
<dbReference type="EMBL" id="JQ013460">
    <property type="protein sequence ID" value="AEY64277.1"/>
    <property type="status" value="ALT_INIT"/>
    <property type="molecule type" value="mRNA"/>
</dbReference>
<dbReference type="EMBL" id="BC124676">
    <property type="protein sequence ID" value="AAI24677.1"/>
    <property type="molecule type" value="mRNA"/>
</dbReference>
<dbReference type="EMBL" id="BC167476">
    <property type="protein sequence ID" value="AAI67476.1"/>
    <property type="status" value="ALT_INIT"/>
    <property type="molecule type" value="mRNA"/>
</dbReference>
<dbReference type="EMBL" id="BX323071">
    <property type="status" value="NOT_ANNOTATED_CDS"/>
    <property type="molecule type" value="Genomic_DNA"/>
</dbReference>
<dbReference type="RefSeq" id="NP_001274012.1">
    <property type="nucleotide sequence ID" value="NM_001287083.1"/>
</dbReference>
<dbReference type="SMR" id="F1QSQ0"/>
<dbReference type="FunCoup" id="F1QSQ0">
    <property type="interactions" value="840"/>
</dbReference>
<dbReference type="STRING" id="7955.ENSDARP00000090832"/>
<dbReference type="PaxDb" id="7955-ENSDARP00000090832"/>
<dbReference type="Ensembl" id="ENSDART00000100060">
    <property type="protein sequence ID" value="ENSDARP00000090832"/>
    <property type="gene ID" value="ENSDARG00000039677"/>
</dbReference>
<dbReference type="GeneID" id="560091"/>
<dbReference type="KEGG" id="dre:560091"/>
<dbReference type="AGR" id="ZFIN:ZDB-GENE-031116-55"/>
<dbReference type="CTD" id="560091"/>
<dbReference type="ZFIN" id="ZDB-GENE-031116-55">
    <property type="gene designation" value="dsc2l"/>
</dbReference>
<dbReference type="eggNOG" id="KOG3594">
    <property type="taxonomic scope" value="Eukaryota"/>
</dbReference>
<dbReference type="HOGENOM" id="CLU_005284_0_2_1"/>
<dbReference type="InParanoid" id="F1QSQ0"/>
<dbReference type="OMA" id="CIPVEDK"/>
<dbReference type="OrthoDB" id="6079678at2759"/>
<dbReference type="TreeFam" id="TF316817"/>
<dbReference type="Reactome" id="R-DRE-6798695">
    <property type="pathway name" value="Neutrophil degranulation"/>
</dbReference>
<dbReference type="Reactome" id="R-DRE-6805567">
    <property type="pathway name" value="Keratinization"/>
</dbReference>
<dbReference type="Reactome" id="R-DRE-6809371">
    <property type="pathway name" value="Formation of the cornified envelope"/>
</dbReference>
<dbReference type="PRO" id="PR:F1QSQ0"/>
<dbReference type="Proteomes" id="UP000000437">
    <property type="component" value="Chromosome 20"/>
</dbReference>
<dbReference type="Bgee" id="ENSDARG00000039677">
    <property type="expression patterns" value="Expressed in zone of skin and 38 other cell types or tissues"/>
</dbReference>
<dbReference type="GO" id="GO:0030057">
    <property type="term" value="C:desmosome"/>
    <property type="evidence" value="ECO:0000318"/>
    <property type="project" value="GO_Central"/>
</dbReference>
<dbReference type="GO" id="GO:0005886">
    <property type="term" value="C:plasma membrane"/>
    <property type="evidence" value="ECO:0007669"/>
    <property type="project" value="UniProtKB-SubCell"/>
</dbReference>
<dbReference type="GO" id="GO:0005509">
    <property type="term" value="F:calcium ion binding"/>
    <property type="evidence" value="ECO:0000318"/>
    <property type="project" value="GO_Central"/>
</dbReference>
<dbReference type="GO" id="GO:0098609">
    <property type="term" value="P:cell-cell adhesion"/>
    <property type="evidence" value="ECO:0000318"/>
    <property type="project" value="GO_Central"/>
</dbReference>
<dbReference type="GO" id="GO:0060027">
    <property type="term" value="P:convergent extension involved in gastrulation"/>
    <property type="evidence" value="ECO:0000315"/>
    <property type="project" value="ZFIN"/>
</dbReference>
<dbReference type="GO" id="GO:0002159">
    <property type="term" value="P:desmosome assembly"/>
    <property type="evidence" value="ECO:0000315"/>
    <property type="project" value="ZFIN"/>
</dbReference>
<dbReference type="GO" id="GO:0055113">
    <property type="term" value="P:epiboly involved in gastrulation with mouth forming second"/>
    <property type="evidence" value="ECO:0000315"/>
    <property type="project" value="ZFIN"/>
</dbReference>
<dbReference type="GO" id="GO:0060047">
    <property type="term" value="P:heart contraction"/>
    <property type="evidence" value="ECO:0000315"/>
    <property type="project" value="UniProtKB"/>
</dbReference>
<dbReference type="GO" id="GO:0007507">
    <property type="term" value="P:heart development"/>
    <property type="evidence" value="ECO:0000315"/>
    <property type="project" value="ZFIN"/>
</dbReference>
<dbReference type="GO" id="GO:0003007">
    <property type="term" value="P:heart morphogenesis"/>
    <property type="evidence" value="ECO:0000315"/>
    <property type="project" value="UniProtKB"/>
</dbReference>
<dbReference type="GO" id="GO:0007156">
    <property type="term" value="P:homophilic cell adhesion via plasma membrane adhesion molecules"/>
    <property type="evidence" value="ECO:0007669"/>
    <property type="project" value="InterPro"/>
</dbReference>
<dbReference type="CDD" id="cd11304">
    <property type="entry name" value="Cadherin_repeat"/>
    <property type="match status" value="4"/>
</dbReference>
<dbReference type="FunFam" id="2.60.40.60:FF:000011">
    <property type="entry name" value="Cadherin 1"/>
    <property type="match status" value="1"/>
</dbReference>
<dbReference type="FunFam" id="2.60.40.60:FF:000019">
    <property type="entry name" value="Cadherin 2"/>
    <property type="match status" value="1"/>
</dbReference>
<dbReference type="FunFam" id="2.60.40.60:FF:000027">
    <property type="entry name" value="Cadherin 2"/>
    <property type="match status" value="1"/>
</dbReference>
<dbReference type="FunFam" id="2.60.40.60:FF:000031">
    <property type="entry name" value="Cadherin 3"/>
    <property type="match status" value="1"/>
</dbReference>
<dbReference type="FunFam" id="2.60.40.60:FF:000413">
    <property type="entry name" value="Desmocollin 2 like"/>
    <property type="match status" value="1"/>
</dbReference>
<dbReference type="Gene3D" id="2.60.40.60">
    <property type="entry name" value="Cadherins"/>
    <property type="match status" value="6"/>
</dbReference>
<dbReference type="Gene3D" id="4.10.900.10">
    <property type="entry name" value="TCF3-CBD (Catenin binding domain)"/>
    <property type="match status" value="1"/>
</dbReference>
<dbReference type="InterPro" id="IPR039808">
    <property type="entry name" value="Cadherin"/>
</dbReference>
<dbReference type="InterPro" id="IPR002126">
    <property type="entry name" value="Cadherin-like_dom"/>
</dbReference>
<dbReference type="InterPro" id="IPR015919">
    <property type="entry name" value="Cadherin-like_sf"/>
</dbReference>
<dbReference type="InterPro" id="IPR020894">
    <property type="entry name" value="Cadherin_CS"/>
</dbReference>
<dbReference type="InterPro" id="IPR014868">
    <property type="entry name" value="Cadherin_pro_dom"/>
</dbReference>
<dbReference type="InterPro" id="IPR000233">
    <property type="entry name" value="Cadherin_Y-type_LIR"/>
</dbReference>
<dbReference type="InterPro" id="IPR027397">
    <property type="entry name" value="Catenin-bd_sf"/>
</dbReference>
<dbReference type="InterPro" id="IPR009122">
    <property type="entry name" value="Desmosomal_cadherin"/>
</dbReference>
<dbReference type="PANTHER" id="PTHR24027:SF422">
    <property type="entry name" value="CADHERIN DOMAIN-CONTAINING PROTEIN"/>
    <property type="match status" value="1"/>
</dbReference>
<dbReference type="PANTHER" id="PTHR24027">
    <property type="entry name" value="CADHERIN-23"/>
    <property type="match status" value="1"/>
</dbReference>
<dbReference type="Pfam" id="PF01049">
    <property type="entry name" value="CADH_Y-type_LIR"/>
    <property type="match status" value="1"/>
</dbReference>
<dbReference type="Pfam" id="PF00028">
    <property type="entry name" value="Cadherin"/>
    <property type="match status" value="4"/>
</dbReference>
<dbReference type="Pfam" id="PF08758">
    <property type="entry name" value="Cadherin_pro"/>
    <property type="match status" value="1"/>
</dbReference>
<dbReference type="PRINTS" id="PR00205">
    <property type="entry name" value="CADHERIN"/>
</dbReference>
<dbReference type="PRINTS" id="PR01818">
    <property type="entry name" value="DESMOCADHERN"/>
</dbReference>
<dbReference type="PRINTS" id="PR01819">
    <property type="entry name" value="DESMOGLEIN"/>
</dbReference>
<dbReference type="SMART" id="SM00112">
    <property type="entry name" value="CA"/>
    <property type="match status" value="4"/>
</dbReference>
<dbReference type="SMART" id="SM01055">
    <property type="entry name" value="Cadherin_pro"/>
    <property type="match status" value="1"/>
</dbReference>
<dbReference type="SUPFAM" id="SSF49313">
    <property type="entry name" value="Cadherin-like"/>
    <property type="match status" value="6"/>
</dbReference>
<dbReference type="PROSITE" id="PS00232">
    <property type="entry name" value="CADHERIN_1"/>
    <property type="match status" value="3"/>
</dbReference>
<dbReference type="PROSITE" id="PS50268">
    <property type="entry name" value="CADHERIN_2"/>
    <property type="match status" value="4"/>
</dbReference>
<evidence type="ECO:0000250" key="1">
    <source>
        <dbReference type="UniProtKB" id="Q02487"/>
    </source>
</evidence>
<evidence type="ECO:0000255" key="2"/>
<evidence type="ECO:0000255" key="3">
    <source>
        <dbReference type="PROSITE-ProRule" id="PRU00043"/>
    </source>
</evidence>
<evidence type="ECO:0000255" key="4">
    <source>
        <dbReference type="PROSITE-ProRule" id="PRU00498"/>
    </source>
</evidence>
<evidence type="ECO:0000269" key="5">
    <source>
    </source>
</evidence>
<evidence type="ECO:0000269" key="6">
    <source>
    </source>
</evidence>
<evidence type="ECO:0000269" key="7">
    <source>
    </source>
</evidence>
<evidence type="ECO:0000303" key="8">
    <source>
    </source>
</evidence>
<evidence type="ECO:0000305" key="9"/>
<evidence type="ECO:0000312" key="10">
    <source>
        <dbReference type="EMBL" id="AAI24677.1"/>
    </source>
</evidence>
<evidence type="ECO:0000312" key="11">
    <source>
        <dbReference type="EMBL" id="AAI67476.1"/>
    </source>
</evidence>
<evidence type="ECO:0000312" key="12">
    <source>
        <dbReference type="EMBL" id="AEY64277.1"/>
    </source>
</evidence>
<evidence type="ECO:0000312" key="13">
    <source>
        <dbReference type="Proteomes" id="UP000000437"/>
    </source>
</evidence>
<evidence type="ECO:0000312" key="14">
    <source>
        <dbReference type="ZFIN" id="ZDB-GENE-031116-55"/>
    </source>
</evidence>
<organism evidence="13">
    <name type="scientific">Danio rerio</name>
    <name type="common">Zebrafish</name>
    <name type="synonym">Brachydanio rerio</name>
    <dbReference type="NCBI Taxonomy" id="7955"/>
    <lineage>
        <taxon>Eukaryota</taxon>
        <taxon>Metazoa</taxon>
        <taxon>Chordata</taxon>
        <taxon>Craniata</taxon>
        <taxon>Vertebrata</taxon>
        <taxon>Euteleostomi</taxon>
        <taxon>Actinopterygii</taxon>
        <taxon>Neopterygii</taxon>
        <taxon>Teleostei</taxon>
        <taxon>Ostariophysi</taxon>
        <taxon>Cypriniformes</taxon>
        <taxon>Danionidae</taxon>
        <taxon>Danioninae</taxon>
        <taxon>Danio</taxon>
    </lineage>
</organism>
<comment type="function">
    <text evidence="5 6 7">A component of desmosome cell-cell junctions which are required for positive regulation of cellular adhesion (PubMed:22235774). Involved in the interaction of plaque proteins and intermediate filaments mediating cell-cell adhesion (PubMed:22235774). Involved in the formation and structural organization of desmosome cell-cell junctions during embryonic development (PubMed:22235774). Required for embryogenesis, specifically for progression of epiboly and normal convergence-extension movements during gastrulation (PubMed:22235774). Required for the development of desmosomal-rich midlines in the heart (PubMed:17186466). Plays an important role in ventricular contraction and resulting heart stroke volume (PubMed:17186466, PubMed:33784018).</text>
</comment>
<comment type="subcellular location">
    <subcellularLocation>
        <location evidence="1">Cell junction</location>
        <location evidence="1">Desmosome</location>
    </subcellularLocation>
    <subcellularLocation>
        <location evidence="1">Cell membrane</location>
        <topology evidence="2">Single-pass type I membrane protein</topology>
    </subcellularLocation>
</comment>
<comment type="tissue specificity">
    <text evidence="5">Expressed at low levels in the brain and heart.</text>
</comment>
<comment type="developmental stage">
    <text evidence="5 6">Expressed at fertilization and up to 2 hours post-fertilization (hpf), expression then declines to low levels at 4 hpf before increasing at 6 hpf onwards until 96 hpf (PubMed:22235774). Expressed in the atrium, ventricle, and both the inflow and outflow tracts at 48 hours post-fertilization (PubMed:17186466).</text>
</comment>
<comment type="domain">
    <text evidence="9">Three calcium ions are usually bound at the interface of each cadherin domain and rigidify the connections, imparting a strong curvature to the full-length ectodomain.</text>
</comment>
<comment type="disruption phenotype">
    <text evidence="5 6 7">Morpholino knockdowns show increased embryonic lethality, with embryos that die developing one of two clear phenotypes following developmental arrest at 10 hpf (PubMed:22235774). The first group show severe epiboly arrest with desmosomal cadherins and enveloping layer becoming detached from the external yolk syncytial layer that continued to undergo epiboly (PubMed:22235774). This results in a population of cells at the animal pole which maintain cell division and some gastrulation movements (PubMed:22235774). In the second phenotype the enveloping layer is attached to the yolk but does not progress through epiboly (PubMed:22235774). The enveloping layer remains attached in a ring to the base of the blastoderm until embryos arrest due to mechanical stress and detachment of the blastoderm from the yolk cell following extensive proliferation and blastoderm growth (PubMed:22235774). Embryos that survive to 14 hpf show morphological defects characteristic of altered gastrulation movements including a shorter embryonic axis, undulating notochord and somites that show either altered morphology or substantial disorganization (PubMed:22235774). Reduced abundance of desmosome cell junctions between cells at the shield stage at 6 hpf (PubMed:22235774). At the 8 somite stage (11 hpf) desmosomes are present however show poor structural organization with a wide intercellular space or unpaired plaques (PubMed:22235774). Bradycardia, chamber dilation, and abnormal cardiac contractility with progressive pericardial edema developing by 48 hpf (PubMed:17186466). Normal desmosomal midline fails to form in the myocardial tissue of the ventricle by 48 hpf (PubMed:17186466). Cardiac edema associated with blood accumulation around the yolk sac, accompanied by decreased cardiac stroke volumes and ventricular contraction at 3 days post-fertilization (PubMed:33784018).</text>
</comment>
<comment type="sequence caution" evidence="9">
    <conflict type="erroneous initiation">
        <sequence resource="EMBL-CDS" id="AAI67476"/>
    </conflict>
    <text>Truncated N-terminus.</text>
</comment>
<comment type="sequence caution" evidence="9">
    <conflict type="erroneous initiation">
        <sequence resource="EMBL-CDS" id="AEY64277"/>
    </conflict>
    <text>Truncated N-terminus.</text>
</comment>
<proteinExistence type="evidence at transcript level"/>
<sequence>MRTPPRPEGLYPSPTVRYTQFMVETGHIQLLQITYPHTHSRFRMYERAHFAACLLALVLFQRAESCDPRPVLVQVPNTVPAGYFITQVTLNGCTAIPVSFTSSDPDFTVNTDGSIVTLRSLVISTKRFSVLVQDNSGLDWRVEIILSCKNEDSQKSGSVAQKRAKRRWRPLPFSVVENASPPFPKDVEMIASDSSVNYTVHYVISGQGVTEEPIGLFQLDQKTGMVRVTGPVDREKNPEFNFIARAFDQNNREVDQFLPITVMVEDVNDNAPEFTGNRFFTVEERCRAGTRVGQVNATDRDQPKTPHSLIKYILLNATDMFSIDQSTGIITAKSNTLDREAQDKVFVGVEIRDMGGAPNGLFNRGTAVISLTDVNDNPPTFKEKLYKGTIKENLANVLVTRIPVEDKDLVNTPNWKAVYEVTKGNENGNFRMETDPKTNEGLLYVVKGLDFEKTPVMNLEVTARNEAPLVGTDAKWQSVPLQLNVEDVDEGPEFNPNIMYLKVKENLPNGTVIGTYKALDPETKNSNGIKYYKLTDPGNWITVVESTGELKVANTIDRESSLVHNDTYNITIKAVDESKKTGNGVVILQIEDVNDNIPVIQRPDLNMCNRGDAVSSVLVEAVDQDKPPYSTPFIFELGAEQEGKWKLKDITDSSVVLQQVEPMPNGMYTVPITVKDLQGTGKEQIVNVRVCSCQREDSGVGICGARSASVSLGNYGILALVLSGLLLLLLCLFLIFFCTTKRDKLQITDDTGTGGILLKSNTEAPGEEVKDGTLLLIPTADVVDGSFQSAVTESKNVNTAPGRYGQQFFQSGGVYNTTTQEFGTDQYYTSGRYDNKIYGNGTLQKFSNTGTLDTWRTNGCYLDRKLAYFGEQEDGRYADDLLKNYGNEGVGSSAGSVGCCSILGEQESMEFLNTLGPKFRPLADICYTTNKTGK</sequence>
<reference evidence="12" key="1">
    <citation type="journal article" date="2012" name="BMC Dev. Biol.">
        <title>Desmosomal cadherins in zebrafish epiboly and gastrulation.</title>
        <authorList>
            <person name="Goonesinghe A."/>
            <person name="Luan X.M."/>
            <person name="Hurlstone A."/>
            <person name="Garrod D."/>
        </authorList>
    </citation>
    <scope>NUCLEOTIDE SEQUENCE [MRNA]</scope>
    <scope>FUNCTION</scope>
    <scope>DEVELOPMENTAL STAGE</scope>
    <scope>DISRUPTION PHENOTYPE</scope>
</reference>
<reference evidence="13" key="2">
    <citation type="journal article" date="2013" name="Nature">
        <title>The zebrafish reference genome sequence and its relationship to the human genome.</title>
        <authorList>
            <person name="Howe K."/>
            <person name="Clark M.D."/>
            <person name="Torroja C.F."/>
            <person name="Torrance J."/>
            <person name="Berthelot C."/>
            <person name="Muffato M."/>
            <person name="Collins J.E."/>
            <person name="Humphray S."/>
            <person name="McLaren K."/>
            <person name="Matthews L."/>
            <person name="McLaren S."/>
            <person name="Sealy I."/>
            <person name="Caccamo M."/>
            <person name="Churcher C."/>
            <person name="Scott C."/>
            <person name="Barrett J.C."/>
            <person name="Koch R."/>
            <person name="Rauch G.J."/>
            <person name="White S."/>
            <person name="Chow W."/>
            <person name="Kilian B."/>
            <person name="Quintais L.T."/>
            <person name="Guerra-Assuncao J.A."/>
            <person name="Zhou Y."/>
            <person name="Gu Y."/>
            <person name="Yen J."/>
            <person name="Vogel J.H."/>
            <person name="Eyre T."/>
            <person name="Redmond S."/>
            <person name="Banerjee R."/>
            <person name="Chi J."/>
            <person name="Fu B."/>
            <person name="Langley E."/>
            <person name="Maguire S.F."/>
            <person name="Laird G.K."/>
            <person name="Lloyd D."/>
            <person name="Kenyon E."/>
            <person name="Donaldson S."/>
            <person name="Sehra H."/>
            <person name="Almeida-King J."/>
            <person name="Loveland J."/>
            <person name="Trevanion S."/>
            <person name="Jones M."/>
            <person name="Quail M."/>
            <person name="Willey D."/>
            <person name="Hunt A."/>
            <person name="Burton J."/>
            <person name="Sims S."/>
            <person name="McLay K."/>
            <person name="Plumb B."/>
            <person name="Davis J."/>
            <person name="Clee C."/>
            <person name="Oliver K."/>
            <person name="Clark R."/>
            <person name="Riddle C."/>
            <person name="Elliot D."/>
            <person name="Threadgold G."/>
            <person name="Harden G."/>
            <person name="Ware D."/>
            <person name="Begum S."/>
            <person name="Mortimore B."/>
            <person name="Kerry G."/>
            <person name="Heath P."/>
            <person name="Phillimore B."/>
            <person name="Tracey A."/>
            <person name="Corby N."/>
            <person name="Dunn M."/>
            <person name="Johnson C."/>
            <person name="Wood J."/>
            <person name="Clark S."/>
            <person name="Pelan S."/>
            <person name="Griffiths G."/>
            <person name="Smith M."/>
            <person name="Glithero R."/>
            <person name="Howden P."/>
            <person name="Barker N."/>
            <person name="Lloyd C."/>
            <person name="Stevens C."/>
            <person name="Harley J."/>
            <person name="Holt K."/>
            <person name="Panagiotidis G."/>
            <person name="Lovell J."/>
            <person name="Beasley H."/>
            <person name="Henderson C."/>
            <person name="Gordon D."/>
            <person name="Auger K."/>
            <person name="Wright D."/>
            <person name="Collins J."/>
            <person name="Raisen C."/>
            <person name="Dyer L."/>
            <person name="Leung K."/>
            <person name="Robertson L."/>
            <person name="Ambridge K."/>
            <person name="Leongamornlert D."/>
            <person name="McGuire S."/>
            <person name="Gilderthorp R."/>
            <person name="Griffiths C."/>
            <person name="Manthravadi D."/>
            <person name="Nichol S."/>
            <person name="Barker G."/>
            <person name="Whitehead S."/>
            <person name="Kay M."/>
            <person name="Brown J."/>
            <person name="Murnane C."/>
            <person name="Gray E."/>
            <person name="Humphries M."/>
            <person name="Sycamore N."/>
            <person name="Barker D."/>
            <person name="Saunders D."/>
            <person name="Wallis J."/>
            <person name="Babbage A."/>
            <person name="Hammond S."/>
            <person name="Mashreghi-Mohammadi M."/>
            <person name="Barr L."/>
            <person name="Martin S."/>
            <person name="Wray P."/>
            <person name="Ellington A."/>
            <person name="Matthews N."/>
            <person name="Ellwood M."/>
            <person name="Woodmansey R."/>
            <person name="Clark G."/>
            <person name="Cooper J."/>
            <person name="Tromans A."/>
            <person name="Grafham D."/>
            <person name="Skuce C."/>
            <person name="Pandian R."/>
            <person name="Andrews R."/>
            <person name="Harrison E."/>
            <person name="Kimberley A."/>
            <person name="Garnett J."/>
            <person name="Fosker N."/>
            <person name="Hall R."/>
            <person name="Garner P."/>
            <person name="Kelly D."/>
            <person name="Bird C."/>
            <person name="Palmer S."/>
            <person name="Gehring I."/>
            <person name="Berger A."/>
            <person name="Dooley C.M."/>
            <person name="Ersan-Urun Z."/>
            <person name="Eser C."/>
            <person name="Geiger H."/>
            <person name="Geisler M."/>
            <person name="Karotki L."/>
            <person name="Kirn A."/>
            <person name="Konantz J."/>
            <person name="Konantz M."/>
            <person name="Oberlander M."/>
            <person name="Rudolph-Geiger S."/>
            <person name="Teucke M."/>
            <person name="Lanz C."/>
            <person name="Raddatz G."/>
            <person name="Osoegawa K."/>
            <person name="Zhu B."/>
            <person name="Rapp A."/>
            <person name="Widaa S."/>
            <person name="Langford C."/>
            <person name="Yang F."/>
            <person name="Schuster S.C."/>
            <person name="Carter N.P."/>
            <person name="Harrow J."/>
            <person name="Ning Z."/>
            <person name="Herrero J."/>
            <person name="Searle S.M."/>
            <person name="Enright A."/>
            <person name="Geisler R."/>
            <person name="Plasterk R.H."/>
            <person name="Lee C."/>
            <person name="Westerfield M."/>
            <person name="de Jong P.J."/>
            <person name="Zon L.I."/>
            <person name="Postlethwait J.H."/>
            <person name="Nusslein-Volhard C."/>
            <person name="Hubbard T.J."/>
            <person name="Roest Crollius H."/>
            <person name="Rogers J."/>
            <person name="Stemple D.L."/>
        </authorList>
    </citation>
    <scope>NUCLEOTIDE SEQUENCE [LARGE SCALE GENOMIC DNA]</scope>
    <source>
        <strain evidence="13">Tuebingen</strain>
    </source>
</reference>
<reference evidence="10 11" key="3">
    <citation type="submission" date="2006-10" db="EMBL/GenBank/DDBJ databases">
        <authorList>
            <consortium name="NIH - Zebrafish Gene Collection (ZGC) project"/>
        </authorList>
    </citation>
    <scope>NUCLEOTIDE SEQUENCE [LARGE SCALE MRNA]</scope>
    <source>
        <strain evidence="10 11">AB</strain>
    </source>
</reference>
<reference evidence="9" key="4">
    <citation type="journal article" date="2006" name="Am. J. Hum. Genet.">
        <title>Mutant desmocollin-2 causes arrhythmogenic right ventricular cardiomyopathy.</title>
        <authorList>
            <person name="Heuser A."/>
            <person name="Plovie E.R."/>
            <person name="Ellinor P.T."/>
            <person name="Grossmann K.S."/>
            <person name="Shin J.T."/>
            <person name="Wichter T."/>
            <person name="Basson C.T."/>
            <person name="Lerman B.B."/>
            <person name="Sasse-Klaassen S."/>
            <person name="Thierfelder L."/>
            <person name="MacRae C.A."/>
            <person name="Gerull B."/>
        </authorList>
    </citation>
    <scope>FUNCTION</scope>
    <scope>TISSUE SPECIFICITY</scope>
    <scope>DEVELOPMENTAL STAGE</scope>
    <scope>DISRUPTION PHENOTYPE</scope>
</reference>
<reference evidence="9" key="5">
    <citation type="journal article" date="2021" name="Clin. Transl. Med.">
        <title>Deciphering DSC2 arrhythmogenic cardiomyopathy electrical instability: From ion channels to ECG and tailored drug therapy.</title>
        <authorList>
            <person name="Moreau A."/>
            <person name="Reisqs J.B."/>
            <person name="Delanoe-Ayari H."/>
            <person name="Pierre M."/>
            <person name="Janin A."/>
            <person name="Deliniere A."/>
            <person name="Bessiere F."/>
            <person name="Meli A.C."/>
            <person name="Charrabi A."/>
            <person name="Lafont E."/>
            <person name="Valla C."/>
            <person name="Bauer D."/>
            <person name="Morel E."/>
            <person name="Gache V."/>
            <person name="Millat G."/>
            <person name="Nissan X."/>
            <person name="Faucherre A."/>
            <person name="Jopling C."/>
            <person name="Richard S."/>
            <person name="Mejat A."/>
            <person name="Chevalier P."/>
        </authorList>
    </citation>
    <scope>FUNCTION</scope>
    <scope>DISRUPTION PHENOTYPE</scope>
</reference>